<organism>
    <name type="scientific">Methylorubrum extorquens (strain CM4 / NCIMB 13688)</name>
    <name type="common">Methylobacterium extorquens</name>
    <dbReference type="NCBI Taxonomy" id="440085"/>
    <lineage>
        <taxon>Bacteria</taxon>
        <taxon>Pseudomonadati</taxon>
        <taxon>Pseudomonadota</taxon>
        <taxon>Alphaproteobacteria</taxon>
        <taxon>Hyphomicrobiales</taxon>
        <taxon>Methylobacteriaceae</taxon>
        <taxon>Methylorubrum</taxon>
    </lineage>
</organism>
<keyword id="KW-0169">Cobalamin biosynthesis</keyword>
<keyword id="KW-0489">Methyltransferase</keyword>
<keyword id="KW-0614">Plasmid</keyword>
<keyword id="KW-0949">S-adenosyl-L-methionine</keyword>
<keyword id="KW-0808">Transferase</keyword>
<sequence length="361" mass="37534">MNSETGALRRGWTTGTCASAAARAAFEALLGIEPEDPVPVTLPSGARPTFALARLDRGSGFVRAGIVKDAGDDPDVTHGALVLATLRFGAPATGIVFRAGPGVGIVTKPGLPLPPGEPAINAMPRRMIRTALTEVAEANGVTCDLVVEVGIEDGERIAERTMNRRLGIIGGLSILGTTGVVVPYSCAAWIASIHRGIDVARAEGLTHLAGATGATSEAAIRNLYGLPEQALIDMGDFVGGMLKYIRGHPVARVTIAGGFAKMTKLAQGRLDLHSKREAIDFRWLAELYCSIGGKAESGMSVRTANTALEVLQMAQAEHVPIAPAIARSACRVAAGALARADIALDVAIFDRDGCLIASERC</sequence>
<accession>Q9X7G7</accession>
<accession>B7L3N5</accession>
<name>CBID_METC4</name>
<evidence type="ECO:0000255" key="1">
    <source>
        <dbReference type="HAMAP-Rule" id="MF_00787"/>
    </source>
</evidence>
<geneLocation type="plasmid">
    <name>pMCHL01</name>
</geneLocation>
<dbReference type="EC" id="2.1.1.195" evidence="1"/>
<dbReference type="EMBL" id="AJ011317">
    <property type="protein sequence ID" value="CAB40740.1"/>
    <property type="molecule type" value="Genomic_DNA"/>
</dbReference>
<dbReference type="EMBL" id="CP001299">
    <property type="protein sequence ID" value="ACK86443.1"/>
    <property type="molecule type" value="Genomic_DNA"/>
</dbReference>
<dbReference type="RefSeq" id="WP_012606333.1">
    <property type="nucleotide sequence ID" value="NC_011758.1"/>
</dbReference>
<dbReference type="SMR" id="Q9X7G7"/>
<dbReference type="KEGG" id="mch:Mchl_5729"/>
<dbReference type="HOGENOM" id="CLU_041273_0_0_5"/>
<dbReference type="UniPathway" id="UPA00148">
    <property type="reaction ID" value="UER00227"/>
</dbReference>
<dbReference type="Proteomes" id="UP000002385">
    <property type="component" value="Plasmid pCMU01"/>
</dbReference>
<dbReference type="GO" id="GO:0043780">
    <property type="term" value="F:cobalt-precorrin-5B C1-methyltransferase activity"/>
    <property type="evidence" value="ECO:0007669"/>
    <property type="project" value="RHEA"/>
</dbReference>
<dbReference type="GO" id="GO:0019251">
    <property type="term" value="P:anaerobic cobalamin biosynthetic process"/>
    <property type="evidence" value="ECO:0007669"/>
    <property type="project" value="UniProtKB-UniRule"/>
</dbReference>
<dbReference type="GO" id="GO:0032259">
    <property type="term" value="P:methylation"/>
    <property type="evidence" value="ECO:0007669"/>
    <property type="project" value="UniProtKB-KW"/>
</dbReference>
<dbReference type="Gene3D" id="3.30.2110.10">
    <property type="entry name" value="CbiD-like"/>
    <property type="match status" value="1"/>
</dbReference>
<dbReference type="HAMAP" id="MF_00787">
    <property type="entry name" value="CbiD"/>
    <property type="match status" value="1"/>
</dbReference>
<dbReference type="InterPro" id="IPR002748">
    <property type="entry name" value="CbiD"/>
</dbReference>
<dbReference type="InterPro" id="IPR036074">
    <property type="entry name" value="CbiD_sf"/>
</dbReference>
<dbReference type="NCBIfam" id="TIGR00312">
    <property type="entry name" value="cbiD"/>
    <property type="match status" value="1"/>
</dbReference>
<dbReference type="NCBIfam" id="NF000849">
    <property type="entry name" value="PRK00075.1-1"/>
    <property type="match status" value="1"/>
</dbReference>
<dbReference type="PANTHER" id="PTHR35863">
    <property type="entry name" value="COBALT-PRECORRIN-5B C(1)-METHYLTRANSFERASE"/>
    <property type="match status" value="1"/>
</dbReference>
<dbReference type="PANTHER" id="PTHR35863:SF1">
    <property type="entry name" value="COBALT-PRECORRIN-5B C(1)-METHYLTRANSFERASE"/>
    <property type="match status" value="1"/>
</dbReference>
<dbReference type="Pfam" id="PF01888">
    <property type="entry name" value="CbiD"/>
    <property type="match status" value="1"/>
</dbReference>
<dbReference type="PIRSF" id="PIRSF026782">
    <property type="entry name" value="CbiD"/>
    <property type="match status" value="1"/>
</dbReference>
<dbReference type="SUPFAM" id="SSF111342">
    <property type="entry name" value="CbiD-like"/>
    <property type="match status" value="1"/>
</dbReference>
<feature type="chain" id="PRO_0000141673" description="Cobalt-precorrin-5B C(1)-methyltransferase">
    <location>
        <begin position="1"/>
        <end position="361"/>
    </location>
</feature>
<proteinExistence type="inferred from homology"/>
<protein>
    <recommendedName>
        <fullName evidence="1">Cobalt-precorrin-5B C(1)-methyltransferase</fullName>
        <ecNumber evidence="1">2.1.1.195</ecNumber>
    </recommendedName>
    <alternativeName>
        <fullName evidence="1">Cobalt-precorrin-6A synthase</fullName>
    </alternativeName>
</protein>
<comment type="function">
    <text evidence="1">Catalyzes the methylation of C-1 in cobalt-precorrin-5B to form cobalt-precorrin-6A.</text>
</comment>
<comment type="catalytic activity">
    <reaction evidence="1">
        <text>Co-precorrin-5B + S-adenosyl-L-methionine = Co-precorrin-6A + S-adenosyl-L-homocysteine</text>
        <dbReference type="Rhea" id="RHEA:26285"/>
        <dbReference type="ChEBI" id="CHEBI:57856"/>
        <dbReference type="ChEBI" id="CHEBI:59789"/>
        <dbReference type="ChEBI" id="CHEBI:60063"/>
        <dbReference type="ChEBI" id="CHEBI:60064"/>
        <dbReference type="EC" id="2.1.1.195"/>
    </reaction>
</comment>
<comment type="pathway">
    <text evidence="1">Cofactor biosynthesis; adenosylcobalamin biosynthesis; cob(II)yrinate a,c-diamide from sirohydrochlorin (anaerobic route): step 6/10.</text>
</comment>
<comment type="similarity">
    <text evidence="1">Belongs to the CbiD family.</text>
</comment>
<reference key="1">
    <citation type="journal article" date="1999" name="Proc. Natl. Acad. Sci. U.S.A.">
        <title>A corrinoid-dependent catabolic pathway for growth of a Methylobacterium strain with chloromethane.</title>
        <authorList>
            <person name="Vannelli T."/>
            <person name="Messmer M."/>
            <person name="Studer A."/>
            <person name="Vuilleumier S."/>
            <person name="Leisinger T."/>
        </authorList>
    </citation>
    <scope>NUCLEOTIDE SEQUENCE [GENOMIC DNA]</scope>
</reference>
<reference key="2">
    <citation type="submission" date="2008-12" db="EMBL/GenBank/DDBJ databases">
        <title>Complete sequence of plasmid1 of Methylobacterium chloromethanicum CM4.</title>
        <authorList>
            <consortium name="US DOE Joint Genome Institute"/>
            <person name="Lucas S."/>
            <person name="Copeland A."/>
            <person name="Lapidus A."/>
            <person name="Glavina del Rio T."/>
            <person name="Dalin E."/>
            <person name="Tice H."/>
            <person name="Bruce D."/>
            <person name="Goodwin L."/>
            <person name="Pitluck S."/>
            <person name="Chertkov O."/>
            <person name="Brettin T."/>
            <person name="Detter J.C."/>
            <person name="Han C."/>
            <person name="Larimer F."/>
            <person name="Land M."/>
            <person name="Hauser L."/>
            <person name="Kyrpides N."/>
            <person name="Mikhailova N."/>
            <person name="Marx C."/>
            <person name="Richardson P."/>
        </authorList>
    </citation>
    <scope>NUCLEOTIDE SEQUENCE [LARGE SCALE GENOMIC DNA]</scope>
    <source>
        <strain>CM4 / NCIMB 13688</strain>
    </source>
</reference>
<gene>
    <name evidence="1" type="primary">cbiD</name>
    <name type="ordered locus">Mchl_5729</name>
</gene>